<comment type="function">
    <text evidence="1">Plays a central role in chromosome condensation, segregation and cell cycle progression. Functions as a homodimer, which is essential for chromosome partition. Involved in negative DNA supercoiling in vivo, and by this means organize and compact chromosomes. May achieve or facilitate chromosome segregation by condensation DNA from both sides of a centrally located replisome during cell division.</text>
</comment>
<comment type="subunit">
    <text evidence="1">Homodimerization via its hinge domain. Binds to DNA via its C-terminal region. Interacts, and probably forms a ternary complex, with MukE and MukF via its C-terminal region. The complex formation is stimulated by calcium or magnesium. Interacts with tubulin-related protein FtsZ.</text>
</comment>
<comment type="subcellular location">
    <subcellularLocation>
        <location evidence="1">Cytoplasm</location>
        <location evidence="1">Nucleoid</location>
    </subcellularLocation>
    <text evidence="1">Restricted to the nucleoid region.</text>
</comment>
<comment type="domain">
    <text evidence="1">The hinge domain, which separates the large intramolecular coiled coil regions, allows the homodimerization, forming a V-shaped homodimer.</text>
</comment>
<comment type="similarity">
    <text evidence="1">Belongs to the SMC family. MukB subfamily.</text>
</comment>
<gene>
    <name evidence="1" type="primary">mukB</name>
    <name type="ordered locus">SF0920</name>
    <name type="ordered locus">S0984</name>
</gene>
<dbReference type="EMBL" id="AE005674">
    <property type="protein sequence ID" value="AAN42549.1"/>
    <property type="molecule type" value="Genomic_DNA"/>
</dbReference>
<dbReference type="EMBL" id="AE014073">
    <property type="protein sequence ID" value="AAP16435.1"/>
    <property type="molecule type" value="Genomic_DNA"/>
</dbReference>
<dbReference type="RefSeq" id="NP_706842.1">
    <property type="nucleotide sequence ID" value="NC_004337.2"/>
</dbReference>
<dbReference type="RefSeq" id="WP_000572706.1">
    <property type="nucleotide sequence ID" value="NZ_WPGW01000072.1"/>
</dbReference>
<dbReference type="SMR" id="Q7ZAM1"/>
<dbReference type="STRING" id="198214.SF0920"/>
<dbReference type="PaxDb" id="198214-SF0920"/>
<dbReference type="GeneID" id="1023891"/>
<dbReference type="KEGG" id="sfl:SF0920"/>
<dbReference type="KEGG" id="sfx:S0984"/>
<dbReference type="PATRIC" id="fig|198214.7.peg.1071"/>
<dbReference type="HOGENOM" id="CLU_004430_0_0_6"/>
<dbReference type="Proteomes" id="UP000001006">
    <property type="component" value="Chromosome"/>
</dbReference>
<dbReference type="Proteomes" id="UP000002673">
    <property type="component" value="Chromosome"/>
</dbReference>
<dbReference type="GO" id="GO:0005737">
    <property type="term" value="C:cytoplasm"/>
    <property type="evidence" value="ECO:0007669"/>
    <property type="project" value="UniProtKB-UniRule"/>
</dbReference>
<dbReference type="GO" id="GO:0009295">
    <property type="term" value="C:nucleoid"/>
    <property type="evidence" value="ECO:0007669"/>
    <property type="project" value="UniProtKB-SubCell"/>
</dbReference>
<dbReference type="GO" id="GO:0005524">
    <property type="term" value="F:ATP binding"/>
    <property type="evidence" value="ECO:0007669"/>
    <property type="project" value="UniProtKB-UniRule"/>
</dbReference>
<dbReference type="GO" id="GO:0003677">
    <property type="term" value="F:DNA binding"/>
    <property type="evidence" value="ECO:0007669"/>
    <property type="project" value="UniProtKB-UniRule"/>
</dbReference>
<dbReference type="GO" id="GO:0051301">
    <property type="term" value="P:cell division"/>
    <property type="evidence" value="ECO:0007669"/>
    <property type="project" value="UniProtKB-KW"/>
</dbReference>
<dbReference type="GO" id="GO:0030261">
    <property type="term" value="P:chromosome condensation"/>
    <property type="evidence" value="ECO:0007669"/>
    <property type="project" value="UniProtKB-KW"/>
</dbReference>
<dbReference type="GO" id="GO:0007059">
    <property type="term" value="P:chromosome segregation"/>
    <property type="evidence" value="ECO:0007669"/>
    <property type="project" value="UniProtKB-UniRule"/>
</dbReference>
<dbReference type="GO" id="GO:0006260">
    <property type="term" value="P:DNA replication"/>
    <property type="evidence" value="ECO:0007669"/>
    <property type="project" value="UniProtKB-UniRule"/>
</dbReference>
<dbReference type="FunFam" id="3.30.70.3500:FF:000001">
    <property type="entry name" value="Chromosome partition protein MukB"/>
    <property type="match status" value="1"/>
</dbReference>
<dbReference type="FunFam" id="3.40.1140.10:FF:000001">
    <property type="entry name" value="Chromosome partition protein MukB"/>
    <property type="match status" value="1"/>
</dbReference>
<dbReference type="FunFam" id="3.40.1140.10:FF:000002">
    <property type="entry name" value="Chromosome partition protein MukB"/>
    <property type="match status" value="1"/>
</dbReference>
<dbReference type="Gene3D" id="1.20.58.850">
    <property type="match status" value="1"/>
</dbReference>
<dbReference type="Gene3D" id="3.40.1140.10">
    <property type="match status" value="2"/>
</dbReference>
<dbReference type="Gene3D" id="1.20.5.420">
    <property type="entry name" value="Immunoglobulin FC, subunit C"/>
    <property type="match status" value="1"/>
</dbReference>
<dbReference type="Gene3D" id="3.30.70.3500">
    <property type="entry name" value="MukB, hinge domain"/>
    <property type="match status" value="1"/>
</dbReference>
<dbReference type="HAMAP" id="MF_01800">
    <property type="entry name" value="MukB"/>
    <property type="match status" value="1"/>
</dbReference>
<dbReference type="InterPro" id="IPR012090">
    <property type="entry name" value="MukB"/>
</dbReference>
<dbReference type="InterPro" id="IPR050308">
    <property type="entry name" value="MukB/SMC"/>
</dbReference>
<dbReference type="InterPro" id="IPR032520">
    <property type="entry name" value="MukB_hinge"/>
</dbReference>
<dbReference type="InterPro" id="IPR042501">
    <property type="entry name" value="MukB_hinge_sf"/>
</dbReference>
<dbReference type="InterPro" id="IPR007406">
    <property type="entry name" value="MukB_N_dom"/>
</dbReference>
<dbReference type="InterPro" id="IPR027417">
    <property type="entry name" value="P-loop_NTPase"/>
</dbReference>
<dbReference type="NCBIfam" id="NF003422">
    <property type="entry name" value="PRK04863.1"/>
    <property type="match status" value="1"/>
</dbReference>
<dbReference type="PANTHER" id="PTHR42963">
    <property type="entry name" value="CHROMOSOME PARTITION PROTEIN MUKB"/>
    <property type="match status" value="1"/>
</dbReference>
<dbReference type="PANTHER" id="PTHR42963:SF1">
    <property type="entry name" value="DUF4476 DOMAIN-CONTAINING PROTEIN"/>
    <property type="match status" value="1"/>
</dbReference>
<dbReference type="Pfam" id="PF04310">
    <property type="entry name" value="MukB"/>
    <property type="match status" value="1"/>
</dbReference>
<dbReference type="Pfam" id="PF16330">
    <property type="entry name" value="MukB_hinge"/>
    <property type="match status" value="1"/>
</dbReference>
<dbReference type="Pfam" id="PF13558">
    <property type="entry name" value="SbcC_Walker_B"/>
    <property type="match status" value="1"/>
</dbReference>
<dbReference type="PIRSF" id="PIRSF005246">
    <property type="entry name" value="MukB"/>
    <property type="match status" value="1"/>
</dbReference>
<dbReference type="SUPFAM" id="SSF52540">
    <property type="entry name" value="P-loop containing nucleoside triphosphate hydrolases"/>
    <property type="match status" value="2"/>
</dbReference>
<feature type="chain" id="PRO_0000068228" description="Chromosome partition protein MukB">
    <location>
        <begin position="1"/>
        <end position="1486"/>
    </location>
</feature>
<feature type="region of interest" description="Flexible hinge" evidence="1">
    <location>
        <begin position="666"/>
        <end position="783"/>
    </location>
</feature>
<feature type="coiled-coil region" evidence="1">
    <location>
        <begin position="326"/>
        <end position="418"/>
    </location>
</feature>
<feature type="coiled-coil region" evidence="1">
    <location>
        <begin position="444"/>
        <end position="480"/>
    </location>
</feature>
<feature type="coiled-coil region" evidence="1">
    <location>
        <begin position="509"/>
        <end position="603"/>
    </location>
</feature>
<feature type="coiled-coil region" evidence="1">
    <location>
        <begin position="835"/>
        <end position="923"/>
    </location>
</feature>
<feature type="coiled-coil region" evidence="1">
    <location>
        <begin position="977"/>
        <end position="1115"/>
    </location>
</feature>
<feature type="coiled-coil region" evidence="1">
    <location>
        <begin position="1209"/>
        <end position="1266"/>
    </location>
</feature>
<feature type="binding site" evidence="1">
    <location>
        <begin position="34"/>
        <end position="41"/>
    </location>
    <ligand>
        <name>ATP</name>
        <dbReference type="ChEBI" id="CHEBI:30616"/>
    </ligand>
</feature>
<name>MUKB_SHIFL</name>
<evidence type="ECO:0000255" key="1">
    <source>
        <dbReference type="HAMAP-Rule" id="MF_01800"/>
    </source>
</evidence>
<organism>
    <name type="scientific">Shigella flexneri</name>
    <dbReference type="NCBI Taxonomy" id="623"/>
    <lineage>
        <taxon>Bacteria</taxon>
        <taxon>Pseudomonadati</taxon>
        <taxon>Pseudomonadota</taxon>
        <taxon>Gammaproteobacteria</taxon>
        <taxon>Enterobacterales</taxon>
        <taxon>Enterobacteriaceae</taxon>
        <taxon>Shigella</taxon>
    </lineage>
</organism>
<reference key="1">
    <citation type="journal article" date="2002" name="Nucleic Acids Res.">
        <title>Genome sequence of Shigella flexneri 2a: insights into pathogenicity through comparison with genomes of Escherichia coli K12 and O157.</title>
        <authorList>
            <person name="Jin Q."/>
            <person name="Yuan Z."/>
            <person name="Xu J."/>
            <person name="Wang Y."/>
            <person name="Shen Y."/>
            <person name="Lu W."/>
            <person name="Wang J."/>
            <person name="Liu H."/>
            <person name="Yang J."/>
            <person name="Yang F."/>
            <person name="Zhang X."/>
            <person name="Zhang J."/>
            <person name="Yang G."/>
            <person name="Wu H."/>
            <person name="Qu D."/>
            <person name="Dong J."/>
            <person name="Sun L."/>
            <person name="Xue Y."/>
            <person name="Zhao A."/>
            <person name="Gao Y."/>
            <person name="Zhu J."/>
            <person name="Kan B."/>
            <person name="Ding K."/>
            <person name="Chen S."/>
            <person name="Cheng H."/>
            <person name="Yao Z."/>
            <person name="He B."/>
            <person name="Chen R."/>
            <person name="Ma D."/>
            <person name="Qiang B."/>
            <person name="Wen Y."/>
            <person name="Hou Y."/>
            <person name="Yu J."/>
        </authorList>
    </citation>
    <scope>NUCLEOTIDE SEQUENCE [LARGE SCALE GENOMIC DNA]</scope>
    <source>
        <strain>301 / Serotype 2a</strain>
    </source>
</reference>
<reference key="2">
    <citation type="journal article" date="2003" name="Infect. Immun.">
        <title>Complete genome sequence and comparative genomics of Shigella flexneri serotype 2a strain 2457T.</title>
        <authorList>
            <person name="Wei J."/>
            <person name="Goldberg M.B."/>
            <person name="Burland V."/>
            <person name="Venkatesan M.M."/>
            <person name="Deng W."/>
            <person name="Fournier G."/>
            <person name="Mayhew G.F."/>
            <person name="Plunkett G. III"/>
            <person name="Rose D.J."/>
            <person name="Darling A."/>
            <person name="Mau B."/>
            <person name="Perna N.T."/>
            <person name="Payne S.M."/>
            <person name="Runyen-Janecky L.J."/>
            <person name="Zhou S."/>
            <person name="Schwartz D.C."/>
            <person name="Blattner F.R."/>
        </authorList>
    </citation>
    <scope>NUCLEOTIDE SEQUENCE [LARGE SCALE GENOMIC DNA]</scope>
    <source>
        <strain>ATCC 700930 / 2457T / Serotype 2a</strain>
    </source>
</reference>
<protein>
    <recommendedName>
        <fullName evidence="1">Chromosome partition protein MukB</fullName>
    </recommendedName>
    <alternativeName>
        <fullName evidence="1">Structural maintenance of chromosome-related protein</fullName>
    </alternativeName>
</protein>
<accession>Q7ZAM1</accession>
<sequence>MIERGKFRSLTLINWNGFFARTFDLDELVTTLSGGNGAGKSTTMAAFVTALIPDLTLLHFRNTTEAGATSGSRDKGLHGKLKAGVCYSMLDTINSRHQRVVVGVRLQQVAGRDRKVDIKPFAIQGLPMSVQPTQLVTETLNERQARVLPLNELKDKLEAMEGVQFKQFNSITDYHSLMFDLGIIARRLRSASDRSKFYRLIEASLYGGISSAITRSLRDYLLPENSGVRKAFQDMEAALRENRMTLEAIRVTQSDRDLFKHLISEATNYVAADYMRHANERRVHLDKALEFRRELHTSRQQLAAEQYKHVDMARELAEHNGAEGDLEADYQAASDHLNLVQTALRQQEKIERYEVDLDELQIRLEEQNEVVAEAIERQEENEARAEAAELEVDELKSQLADYQQALDVQQTRAIQYNQAIAALNRAKELCHLPDLTADSAAEWLETFQAKELEATEKMLSLEQKMSMAQTAHSQFEQAYQLVVAINGPLARNEAWDVARELLREGVDQRHLAEQVQPLRMRLSELEQRLREQQEAERLLADFCKRQGKNFDIDELEALHQELEARIASLSDSVSNAREERMALRQEQEQLQSRIQSLMQRAPVWLAAQNSLNQLSEQCGEEFSSSQDVTEYLQQLLEREREAIVERDEVGARKNAVDEEIERLSQPGGSEDQRLNALAERFGGVLLSEIYDDVSLEDAPYFSALYGPSRHAIVVPDLSQVTEHLEGLTDCPEDLYLIEGDPQSFDDSVFSVDELEKAVVVKIADRQWRYSRFPEVPLFGRAARESRIESLHAEREVLSERFATLSFDVQKTQRLHQAFSRFIGSHLAVAFESDPEAEIRQLNSRRVELERALSNHENDNQQQRIQFEQAKEGVTALNRILPRLNLLADDSLADRVDEIRERLDEAQEAARFVQQFGNQLAKLEPIVSVLQSDPEQFEQLKEDYAYSQQMQRDARQQAFALTEVVQRRAHFSYSDSAEMLSGNSDLNEKLRERLEQAEAERTRAREALRGHAAQLSQYNQVLASLKSSYDTKKELLNDLQRELQDIGVRADSGAEERARIRRDELHAQLSNNRSRRNQLEKALTFCEAEMDNLTRKLRKLERDYFEMREQVVTAKAGWCAVMRMVKDNGVERRLHRRELAYLSADDLRSMSDKALGALRLAVADNEHLRDVLRMSEDPKRPERKIQFFVAVYQHLRERIRQDIIRTDDPVEAIEQMEIELSRLTEELTSREQKLAISSRSVANIIRKTIQREQNRIRMLNQGLQNVSFGQVNSVRLNVNVRETHAMLLDVLSEQHEQHQDLFNSNRLTFSEALAKLYQRLNPQIDMGQRTPQTIGEELLDYRNYLEMEVEVNRGSDGWLRAESGALSTGEAIGTGMSILVMVVQSWEDESRRLRGKDISPCRLLFLDEAARLDARSIATLFELCERLQMQLIIAAPENISPEKGTTYKLVRKVFQNTEHVHVVGLRGFAPQLPETLLGRDEAPSQAS</sequence>
<proteinExistence type="inferred from homology"/>
<keyword id="KW-0067">ATP-binding</keyword>
<keyword id="KW-0131">Cell cycle</keyword>
<keyword id="KW-0132">Cell division</keyword>
<keyword id="KW-0159">Chromosome partition</keyword>
<keyword id="KW-0175">Coiled coil</keyword>
<keyword id="KW-0963">Cytoplasm</keyword>
<keyword id="KW-0226">DNA condensation</keyword>
<keyword id="KW-0238">DNA-binding</keyword>
<keyword id="KW-0547">Nucleotide-binding</keyword>
<keyword id="KW-1185">Reference proteome</keyword>